<comment type="similarity">
    <text evidence="1">Belongs to the asfivirus C84L family.</text>
</comment>
<proteinExistence type="inferred from homology"/>
<reference key="1">
    <citation type="submission" date="2003-03" db="EMBL/GenBank/DDBJ databases">
        <title>African swine fever virus genomes.</title>
        <authorList>
            <person name="Kutish G.F."/>
            <person name="Rock D.L."/>
        </authorList>
    </citation>
    <scope>NUCLEOTIDE SEQUENCE [LARGE SCALE GENOMIC DNA]</scope>
</reference>
<sequence length="38" mass="4537">MMMFITVYDINQKQKKRYGLRGCNLNLKATVLPLHKRI</sequence>
<organismHost>
    <name type="scientific">Ornithodoros</name>
    <name type="common">relapsing fever ticks</name>
    <dbReference type="NCBI Taxonomy" id="6937"/>
</organismHost>
<organismHost>
    <name type="scientific">Phacochoerus aethiopicus</name>
    <name type="common">Warthog</name>
    <dbReference type="NCBI Taxonomy" id="85517"/>
</organismHost>
<organismHost>
    <name type="scientific">Phacochoerus africanus</name>
    <name type="common">Warthog</name>
    <dbReference type="NCBI Taxonomy" id="41426"/>
</organismHost>
<organismHost>
    <name type="scientific">Potamochoerus larvatus</name>
    <name type="common">Bushpig</name>
    <dbReference type="NCBI Taxonomy" id="273792"/>
</organismHost>
<organismHost>
    <name type="scientific">Sus scrofa</name>
    <name type="common">Pig</name>
    <dbReference type="NCBI Taxonomy" id="9823"/>
</organismHost>
<organism>
    <name type="scientific">African swine fever virus (isolate Tick/South Africa/Pretoriuskop Pr4/1996)</name>
    <name type="common">ASFV</name>
    <dbReference type="NCBI Taxonomy" id="561443"/>
    <lineage>
        <taxon>Viruses</taxon>
        <taxon>Varidnaviria</taxon>
        <taxon>Bamfordvirae</taxon>
        <taxon>Nucleocytoviricota</taxon>
        <taxon>Pokkesviricetes</taxon>
        <taxon>Asfuvirales</taxon>
        <taxon>Asfarviridae</taxon>
        <taxon>Asfivirus</taxon>
        <taxon>African swine fever virus</taxon>
    </lineage>
</organism>
<evidence type="ECO:0000305" key="1"/>
<name>VF84L_ASFP4</name>
<accession>P0CAL2</accession>
<dbReference type="EMBL" id="AY261363">
    <property type="status" value="NOT_ANNOTATED_CDS"/>
    <property type="molecule type" value="Genomic_DNA"/>
</dbReference>
<dbReference type="Proteomes" id="UP000000859">
    <property type="component" value="Segment"/>
</dbReference>
<gene>
    <name type="ordered locus">Pret-075</name>
</gene>
<protein>
    <recommendedName>
        <fullName>Uncharacterized protein C84L</fullName>
        <shortName>pC84L</shortName>
    </recommendedName>
</protein>
<feature type="chain" id="PRO_0000373742" description="Uncharacterized protein C84L">
    <location>
        <begin position="1"/>
        <end position="38"/>
    </location>
</feature>